<keyword id="KW-0320">Glycogen biosynthesis</keyword>
<keyword id="KW-0328">Glycosyltransferase</keyword>
<keyword id="KW-0808">Transferase</keyword>
<feature type="chain" id="PRO_1000126101" description="Glycogen synthase">
    <location>
        <begin position="1"/>
        <end position="477"/>
    </location>
</feature>
<feature type="binding site" evidence="1">
    <location>
        <position position="15"/>
    </location>
    <ligand>
        <name>ADP-alpha-D-glucose</name>
        <dbReference type="ChEBI" id="CHEBI:57498"/>
    </ligand>
</feature>
<reference key="1">
    <citation type="journal article" date="2009" name="BMC Genomics">
        <title>Pseudogene accumulation in the evolutionary histories of Salmonella enterica serovars Paratyphi A and Typhi.</title>
        <authorList>
            <person name="Holt K.E."/>
            <person name="Thomson N.R."/>
            <person name="Wain J."/>
            <person name="Langridge G.C."/>
            <person name="Hasan R."/>
            <person name="Bhutta Z.A."/>
            <person name="Quail M.A."/>
            <person name="Norbertczak H."/>
            <person name="Walker D."/>
            <person name="Simmonds M."/>
            <person name="White B."/>
            <person name="Bason N."/>
            <person name="Mungall K."/>
            <person name="Dougan G."/>
            <person name="Parkhill J."/>
        </authorList>
    </citation>
    <scope>NUCLEOTIDE SEQUENCE [LARGE SCALE GENOMIC DNA]</scope>
    <source>
        <strain>AKU_12601</strain>
    </source>
</reference>
<evidence type="ECO:0000255" key="1">
    <source>
        <dbReference type="HAMAP-Rule" id="MF_00484"/>
    </source>
</evidence>
<accession>B5BHH9</accession>
<gene>
    <name evidence="1" type="primary">glgA</name>
    <name type="ordered locus">SSPA3161</name>
</gene>
<comment type="function">
    <text evidence="1">Synthesizes alpha-1,4-glucan chains using ADP-glucose.</text>
</comment>
<comment type="catalytic activity">
    <reaction evidence="1">
        <text>[(1-&gt;4)-alpha-D-glucosyl](n) + ADP-alpha-D-glucose = [(1-&gt;4)-alpha-D-glucosyl](n+1) + ADP + H(+)</text>
        <dbReference type="Rhea" id="RHEA:18189"/>
        <dbReference type="Rhea" id="RHEA-COMP:9584"/>
        <dbReference type="Rhea" id="RHEA-COMP:9587"/>
        <dbReference type="ChEBI" id="CHEBI:15378"/>
        <dbReference type="ChEBI" id="CHEBI:15444"/>
        <dbReference type="ChEBI" id="CHEBI:57498"/>
        <dbReference type="ChEBI" id="CHEBI:456216"/>
        <dbReference type="EC" id="2.4.1.21"/>
    </reaction>
</comment>
<comment type="pathway">
    <text evidence="1">Glycan biosynthesis; glycogen biosynthesis.</text>
</comment>
<comment type="similarity">
    <text evidence="1">Belongs to the glycosyltransferase 1 family. Bacterial/plant glycogen synthase subfamily.</text>
</comment>
<dbReference type="EC" id="2.4.1.21" evidence="1"/>
<dbReference type="EMBL" id="FM200053">
    <property type="protein sequence ID" value="CAR61416.1"/>
    <property type="molecule type" value="Genomic_DNA"/>
</dbReference>
<dbReference type="RefSeq" id="WP_001197669.1">
    <property type="nucleotide sequence ID" value="NC_011147.1"/>
</dbReference>
<dbReference type="SMR" id="B5BHH9"/>
<dbReference type="CAZy" id="GT5">
    <property type="family name" value="Glycosyltransferase Family 5"/>
</dbReference>
<dbReference type="KEGG" id="sek:SSPA3161"/>
<dbReference type="HOGENOM" id="CLU_009583_18_4_6"/>
<dbReference type="UniPathway" id="UPA00164"/>
<dbReference type="Proteomes" id="UP000001869">
    <property type="component" value="Chromosome"/>
</dbReference>
<dbReference type="GO" id="GO:0005829">
    <property type="term" value="C:cytosol"/>
    <property type="evidence" value="ECO:0007669"/>
    <property type="project" value="TreeGrafter"/>
</dbReference>
<dbReference type="GO" id="GO:0009011">
    <property type="term" value="F:alpha-1,4-glucan glucosyltransferase (ADP-glucose donor) activity"/>
    <property type="evidence" value="ECO:0007669"/>
    <property type="project" value="UniProtKB-UniRule"/>
</dbReference>
<dbReference type="GO" id="GO:0004373">
    <property type="term" value="F:alpha-1,4-glucan glucosyltransferase (UDP-glucose donor) activity"/>
    <property type="evidence" value="ECO:0007669"/>
    <property type="project" value="InterPro"/>
</dbReference>
<dbReference type="GO" id="GO:0005978">
    <property type="term" value="P:glycogen biosynthetic process"/>
    <property type="evidence" value="ECO:0007669"/>
    <property type="project" value="UniProtKB-UniRule"/>
</dbReference>
<dbReference type="CDD" id="cd03791">
    <property type="entry name" value="GT5_Glycogen_synthase_DULL1-like"/>
    <property type="match status" value="1"/>
</dbReference>
<dbReference type="FunFam" id="3.40.50.2000:FF:000008">
    <property type="entry name" value="Glycogen synthase"/>
    <property type="match status" value="1"/>
</dbReference>
<dbReference type="FunFam" id="3.40.50.2000:FF:000011">
    <property type="entry name" value="Glycogen synthase"/>
    <property type="match status" value="1"/>
</dbReference>
<dbReference type="Gene3D" id="3.40.50.2000">
    <property type="entry name" value="Glycogen Phosphorylase B"/>
    <property type="match status" value="2"/>
</dbReference>
<dbReference type="HAMAP" id="MF_00484">
    <property type="entry name" value="Glycogen_synth"/>
    <property type="match status" value="1"/>
</dbReference>
<dbReference type="InterPro" id="IPR001296">
    <property type="entry name" value="Glyco_trans_1"/>
</dbReference>
<dbReference type="InterPro" id="IPR011835">
    <property type="entry name" value="GS/SS"/>
</dbReference>
<dbReference type="InterPro" id="IPR013534">
    <property type="entry name" value="Starch_synth_cat_dom"/>
</dbReference>
<dbReference type="NCBIfam" id="TIGR02095">
    <property type="entry name" value="glgA"/>
    <property type="match status" value="1"/>
</dbReference>
<dbReference type="NCBIfam" id="NF001899">
    <property type="entry name" value="PRK00654.1-2"/>
    <property type="match status" value="1"/>
</dbReference>
<dbReference type="PANTHER" id="PTHR45825:SF11">
    <property type="entry name" value="ALPHA AMYLASE DOMAIN-CONTAINING PROTEIN"/>
    <property type="match status" value="1"/>
</dbReference>
<dbReference type="PANTHER" id="PTHR45825">
    <property type="entry name" value="GRANULE-BOUND STARCH SYNTHASE 1, CHLOROPLASTIC/AMYLOPLASTIC"/>
    <property type="match status" value="1"/>
</dbReference>
<dbReference type="Pfam" id="PF08323">
    <property type="entry name" value="Glyco_transf_5"/>
    <property type="match status" value="1"/>
</dbReference>
<dbReference type="Pfam" id="PF00534">
    <property type="entry name" value="Glycos_transf_1"/>
    <property type="match status" value="1"/>
</dbReference>
<dbReference type="SUPFAM" id="SSF53756">
    <property type="entry name" value="UDP-Glycosyltransferase/glycogen phosphorylase"/>
    <property type="match status" value="1"/>
</dbReference>
<sequence>MQVLHVCSEMFPLLKTGGLADVIGALPAAQIADGVDVRVLLPGFPDIRRGIPDAHVVSRRDTFAGKISLLFGHYNGVGIYLIDAPHLYERPGSPYHDTNLYAYTDNVLRFALLGWVGCEMACGLDPFWRPDVVHAHDWHAGLAPAYLAARGRPAKSVFTVHNLAYQGMFYAKHMDDIELPWSFFNMHGLEFNGQLSFLKAGLYYADHITAVSPTYAREITEPQFAYGMEGLLRQRHLEGRLSGILNGVDEKIWNPESDLLLASRYTRDTLEEKAENKRQLQIAMGLKVNDKVPLFAVVSRLTNQKGLDLVLEALPGLLEQGGQLALLGAGDPVLQEGFLAAAAEHPGQVGVQIGYHEAFSHRIMGGADVILVPSRFEPCGLTQLYGLKYGTLPLVRRTGGLADTVSDSSLENLADGIASGFVFEDSNAWSLLRAIRRAFVLWSRPSLWRFVQRQAMAMDFSWQVAAKSYRELYYRLK</sequence>
<proteinExistence type="inferred from homology"/>
<protein>
    <recommendedName>
        <fullName evidence="1">Glycogen synthase</fullName>
        <ecNumber evidence="1">2.4.1.21</ecNumber>
    </recommendedName>
    <alternativeName>
        <fullName evidence="1">Starch [bacterial glycogen] synthase</fullName>
    </alternativeName>
</protein>
<organism>
    <name type="scientific">Salmonella paratyphi A (strain AKU_12601)</name>
    <dbReference type="NCBI Taxonomy" id="554290"/>
    <lineage>
        <taxon>Bacteria</taxon>
        <taxon>Pseudomonadati</taxon>
        <taxon>Pseudomonadota</taxon>
        <taxon>Gammaproteobacteria</taxon>
        <taxon>Enterobacterales</taxon>
        <taxon>Enterobacteriaceae</taxon>
        <taxon>Salmonella</taxon>
    </lineage>
</organism>
<name>GLGA_SALPK</name>